<name>SPEE_MOUSE</name>
<feature type="chain" id="PRO_0000156446" description="Spermidine synthase">
    <location>
        <begin position="1"/>
        <end position="302"/>
    </location>
</feature>
<feature type="domain" description="PABS">
    <location>
        <begin position="18"/>
        <end position="253"/>
    </location>
</feature>
<feature type="active site" description="Proton acceptor" evidence="1">
    <location>
        <position position="173"/>
    </location>
</feature>
<feature type="binding site" evidence="1">
    <location>
        <position position="49"/>
    </location>
    <ligand>
        <name>S-adenosyl 3-(methylsulfanyl)propylamine</name>
        <dbReference type="ChEBI" id="CHEBI:57443"/>
    </ligand>
</feature>
<feature type="binding site" evidence="1">
    <location>
        <position position="79"/>
    </location>
    <ligand>
        <name>putrescine</name>
        <dbReference type="ChEBI" id="CHEBI:326268"/>
    </ligand>
</feature>
<feature type="binding site" evidence="1">
    <location>
        <position position="80"/>
    </location>
    <ligand>
        <name>S-adenosyl 3-(methylsulfanyl)propylamine</name>
        <dbReference type="ChEBI" id="CHEBI:57443"/>
    </ligand>
</feature>
<feature type="binding site" evidence="1">
    <location>
        <position position="104"/>
    </location>
    <ligand>
        <name>S-adenosyl 3-(methylsulfanyl)propylamine</name>
        <dbReference type="ChEBI" id="CHEBI:57443"/>
    </ligand>
</feature>
<feature type="binding site" evidence="1">
    <location>
        <position position="124"/>
    </location>
    <ligand>
        <name>S-adenosyl 3-(methylsulfanyl)propylamine</name>
        <dbReference type="ChEBI" id="CHEBI:57443"/>
    </ligand>
</feature>
<feature type="binding site" evidence="1">
    <location>
        <begin position="155"/>
        <end position="156"/>
    </location>
    <ligand>
        <name>S-adenosyl 3-(methylsulfanyl)propylamine</name>
        <dbReference type="ChEBI" id="CHEBI:57443"/>
    </ligand>
</feature>
<feature type="binding site" evidence="1">
    <location>
        <begin position="173"/>
        <end position="176"/>
    </location>
    <ligand>
        <name>putrescine</name>
        <dbReference type="ChEBI" id="CHEBI:326268"/>
    </ligand>
</feature>
<feature type="binding site" evidence="1">
    <location>
        <position position="173"/>
    </location>
    <ligand>
        <name>S-adenosyl 3-(methylsulfanyl)propylamine</name>
        <dbReference type="ChEBI" id="CHEBI:57443"/>
    </ligand>
</feature>
<feature type="binding site" evidence="1">
    <location>
        <position position="241"/>
    </location>
    <ligand>
        <name>putrescine</name>
        <dbReference type="ChEBI" id="CHEBI:326268"/>
    </ligand>
</feature>
<feature type="modified residue" description="N-acetylmethionine" evidence="2">
    <location>
        <position position="1"/>
    </location>
</feature>
<reference key="1">
    <citation type="journal article" date="1994" name="DNA Seq.">
        <title>Nucleotide sequence of mouse spermidine synthase cDNA.</title>
        <authorList>
            <person name="Myoehaenen S."/>
            <person name="Wahlfors J."/>
            <person name="Alhonen L."/>
            <person name="Jaenne J."/>
        </authorList>
    </citation>
    <scope>NUCLEOTIDE SEQUENCE [MRNA]</scope>
    <source>
        <tissue>Kidney</tissue>
    </source>
</reference>
<reference key="2">
    <citation type="submission" date="1995-11" db="EMBL/GenBank/DDBJ databases">
        <authorList>
            <person name="Kolu P.V."/>
            <person name="Kauppinen L."/>
            <person name="Halmekytoe M."/>
            <person name="Alhonen L."/>
            <person name="Jaenne J."/>
        </authorList>
    </citation>
    <scope>NUCLEOTIDE SEQUENCE</scope>
    <source>
        <strain>129/SvJ</strain>
        <tissue>Liver</tissue>
    </source>
</reference>
<reference key="3">
    <citation type="journal article" date="2004" name="Genome Res.">
        <title>The status, quality, and expansion of the NIH full-length cDNA project: the Mammalian Gene Collection (MGC).</title>
        <authorList>
            <consortium name="The MGC Project Team"/>
        </authorList>
    </citation>
    <scope>NUCLEOTIDE SEQUENCE [LARGE SCALE MRNA]</scope>
    <source>
        <strain>FVB/N</strain>
        <tissue>Mammary gland</tissue>
    </source>
</reference>
<reference key="4">
    <citation type="journal article" date="2010" name="Cell">
        <title>A tissue-specific atlas of mouse protein phosphorylation and expression.</title>
        <authorList>
            <person name="Huttlin E.L."/>
            <person name="Jedrychowski M.P."/>
            <person name="Elias J.E."/>
            <person name="Goswami T."/>
            <person name="Rad R."/>
            <person name="Beausoleil S.A."/>
            <person name="Villen J."/>
            <person name="Haas W."/>
            <person name="Sowa M.E."/>
            <person name="Gygi S.P."/>
        </authorList>
    </citation>
    <scope>IDENTIFICATION BY MASS SPECTROMETRY [LARGE SCALE ANALYSIS]</scope>
    <source>
        <tissue>Brain</tissue>
        <tissue>Brown adipose tissue</tissue>
        <tissue>Heart</tissue>
        <tissue>Kidney</tissue>
        <tissue>Liver</tissue>
        <tissue>Lung</tissue>
        <tissue>Pancreas</tissue>
        <tissue>Spleen</tissue>
        <tissue>Testis</tissue>
    </source>
</reference>
<gene>
    <name type="primary">Srm</name>
</gene>
<keyword id="KW-0007">Acetylation</keyword>
<keyword id="KW-0620">Polyamine biosynthesis</keyword>
<keyword id="KW-1185">Reference proteome</keyword>
<keyword id="KW-0745">Spermidine biosynthesis</keyword>
<keyword id="KW-0808">Transferase</keyword>
<protein>
    <recommendedName>
        <fullName>Spermidine synthase</fullName>
        <shortName>SPDSY</shortName>
        <ecNumber>2.5.1.16</ecNumber>
    </recommendedName>
    <alternativeName>
        <fullName>Putrescine aminopropyltransferase</fullName>
    </alternativeName>
</protein>
<proteinExistence type="evidence at protein level"/>
<evidence type="ECO:0000250" key="1"/>
<evidence type="ECO:0000250" key="2">
    <source>
        <dbReference type="UniProtKB" id="P19623"/>
    </source>
</evidence>
<evidence type="ECO:0000305" key="3"/>
<organism>
    <name type="scientific">Mus musculus</name>
    <name type="common">Mouse</name>
    <dbReference type="NCBI Taxonomy" id="10090"/>
    <lineage>
        <taxon>Eukaryota</taxon>
        <taxon>Metazoa</taxon>
        <taxon>Chordata</taxon>
        <taxon>Craniata</taxon>
        <taxon>Vertebrata</taxon>
        <taxon>Euteleostomi</taxon>
        <taxon>Mammalia</taxon>
        <taxon>Eutheria</taxon>
        <taxon>Euarchontoglires</taxon>
        <taxon>Glires</taxon>
        <taxon>Rodentia</taxon>
        <taxon>Myomorpha</taxon>
        <taxon>Muroidea</taxon>
        <taxon>Muridae</taxon>
        <taxon>Murinae</taxon>
        <taxon>Mus</taxon>
        <taxon>Mus</taxon>
    </lineage>
</organism>
<sequence>MEPGPDGPAAPGPAAIREGWFRETCSLWPGQALSLQVEQLLHHRRSRYQDILVFRSKTYGNVLVLDGVIQCTERDEFSYQEMIANLPLCSHPNPRKVLIIGGGDGGVLREVVKHPSVESVVQCEIDEDVIEVSKKFLPGMAVGFSSSKLTLHVGDGFEFMKQNQDAFDVIITDSSDPMGPAESLFKESYYQLMKTALKEDGILCCQGECQWLHLDLIKEMRHFCKSLFPVVDYAYCSIPTYPSGQIGFMLCSKNPSTNFREPVQQLTQAQVEQMQLKYYNSDMHRAAFVLPEFTRKALNDIS</sequence>
<dbReference type="EC" id="2.5.1.16"/>
<dbReference type="EMBL" id="Z67748">
    <property type="protein sequence ID" value="CAA91561.1"/>
    <property type="molecule type" value="Genomic_DNA"/>
</dbReference>
<dbReference type="EMBL" id="L19311">
    <property type="protein sequence ID" value="AAC37666.1"/>
    <property type="molecule type" value="mRNA"/>
</dbReference>
<dbReference type="EMBL" id="BC005566">
    <property type="protein sequence ID" value="AAH05566.1"/>
    <property type="molecule type" value="mRNA"/>
</dbReference>
<dbReference type="CCDS" id="CCDS18940.1"/>
<dbReference type="RefSeq" id="NP_033298.1">
    <property type="nucleotide sequence ID" value="NM_009272.4"/>
</dbReference>
<dbReference type="SMR" id="Q64674"/>
<dbReference type="BioGRID" id="203498">
    <property type="interactions" value="2"/>
</dbReference>
<dbReference type="FunCoup" id="Q64674">
    <property type="interactions" value="1735"/>
</dbReference>
<dbReference type="STRING" id="10090.ENSMUSP00000006611"/>
<dbReference type="iPTMnet" id="Q64674"/>
<dbReference type="PhosphoSitePlus" id="Q64674"/>
<dbReference type="SwissPalm" id="Q64674"/>
<dbReference type="REPRODUCTION-2DPAGE" id="Q64674"/>
<dbReference type="jPOST" id="Q64674"/>
<dbReference type="PaxDb" id="10090-ENSMUSP00000006611"/>
<dbReference type="ProteomicsDB" id="261128"/>
<dbReference type="Pumba" id="Q64674"/>
<dbReference type="Antibodypedia" id="13673">
    <property type="antibodies" value="245 antibodies from 28 providers"/>
</dbReference>
<dbReference type="DNASU" id="20810"/>
<dbReference type="Ensembl" id="ENSMUST00000006611.9">
    <property type="protein sequence ID" value="ENSMUSP00000006611.9"/>
    <property type="gene ID" value="ENSMUSG00000006442.11"/>
</dbReference>
<dbReference type="GeneID" id="20810"/>
<dbReference type="KEGG" id="mmu:20810"/>
<dbReference type="UCSC" id="uc008vuw.1">
    <property type="organism name" value="mouse"/>
</dbReference>
<dbReference type="AGR" id="MGI:102690"/>
<dbReference type="CTD" id="6723"/>
<dbReference type="MGI" id="MGI:102690">
    <property type="gene designation" value="Srm"/>
</dbReference>
<dbReference type="VEuPathDB" id="HostDB:ENSMUSG00000006442"/>
<dbReference type="eggNOG" id="KOG1562">
    <property type="taxonomic scope" value="Eukaryota"/>
</dbReference>
<dbReference type="GeneTree" id="ENSGT00870000136521"/>
<dbReference type="HOGENOM" id="CLU_048199_3_1_1"/>
<dbReference type="InParanoid" id="Q64674"/>
<dbReference type="OMA" id="FLYHEMM"/>
<dbReference type="OrthoDB" id="38125at2759"/>
<dbReference type="PhylomeDB" id="Q64674"/>
<dbReference type="TreeFam" id="TF314466"/>
<dbReference type="Reactome" id="R-MMU-351202">
    <property type="pathway name" value="Metabolism of polyamines"/>
</dbReference>
<dbReference type="UniPathway" id="UPA00248">
    <property type="reaction ID" value="UER00314"/>
</dbReference>
<dbReference type="BioGRID-ORCS" id="20810">
    <property type="hits" value="12 hits in 78 CRISPR screens"/>
</dbReference>
<dbReference type="ChiTaRS" id="Srm">
    <property type="organism name" value="mouse"/>
</dbReference>
<dbReference type="PRO" id="PR:Q64674"/>
<dbReference type="Proteomes" id="UP000000589">
    <property type="component" value="Chromosome 4"/>
</dbReference>
<dbReference type="RNAct" id="Q64674">
    <property type="molecule type" value="protein"/>
</dbReference>
<dbReference type="Bgee" id="ENSMUSG00000006442">
    <property type="expression patterns" value="Expressed in somite and 280 other cell types or tissues"/>
</dbReference>
<dbReference type="ExpressionAtlas" id="Q64674">
    <property type="expression patterns" value="baseline and differential"/>
</dbReference>
<dbReference type="GO" id="GO:0042803">
    <property type="term" value="F:protein homodimerization activity"/>
    <property type="evidence" value="ECO:0007669"/>
    <property type="project" value="Ensembl"/>
</dbReference>
<dbReference type="GO" id="GO:0004766">
    <property type="term" value="F:spermidine synthase activity"/>
    <property type="evidence" value="ECO:0000250"/>
    <property type="project" value="UniProtKB"/>
</dbReference>
<dbReference type="GO" id="GO:1990830">
    <property type="term" value="P:cellular response to leukemia inhibitory factor"/>
    <property type="evidence" value="ECO:0000270"/>
    <property type="project" value="MGI"/>
</dbReference>
<dbReference type="GO" id="GO:0008295">
    <property type="term" value="P:spermidine biosynthetic process"/>
    <property type="evidence" value="ECO:0000250"/>
    <property type="project" value="UniProtKB"/>
</dbReference>
<dbReference type="CDD" id="cd02440">
    <property type="entry name" value="AdoMet_MTases"/>
    <property type="match status" value="1"/>
</dbReference>
<dbReference type="FunFam" id="2.30.140.10:FF:000001">
    <property type="entry name" value="SPE3p Spermidine synthase"/>
    <property type="match status" value="1"/>
</dbReference>
<dbReference type="FunFam" id="3.40.50.150:FF:000013">
    <property type="entry name" value="Spermidine synthase"/>
    <property type="match status" value="1"/>
</dbReference>
<dbReference type="Gene3D" id="2.30.140.10">
    <property type="entry name" value="Spermidine synthase, tetramerisation domain"/>
    <property type="match status" value="1"/>
</dbReference>
<dbReference type="Gene3D" id="3.40.50.150">
    <property type="entry name" value="Vaccinia Virus protein VP39"/>
    <property type="match status" value="1"/>
</dbReference>
<dbReference type="HAMAP" id="MF_00198">
    <property type="entry name" value="Spermidine_synth"/>
    <property type="match status" value="1"/>
</dbReference>
<dbReference type="InterPro" id="IPR030374">
    <property type="entry name" value="PABS"/>
</dbReference>
<dbReference type="InterPro" id="IPR030373">
    <property type="entry name" value="PABS_CS"/>
</dbReference>
<dbReference type="InterPro" id="IPR029063">
    <property type="entry name" value="SAM-dependent_MTases_sf"/>
</dbReference>
<dbReference type="InterPro" id="IPR001045">
    <property type="entry name" value="Spermi_synthase"/>
</dbReference>
<dbReference type="InterPro" id="IPR030668">
    <property type="entry name" value="Spermi_synthase_euk"/>
</dbReference>
<dbReference type="InterPro" id="IPR035246">
    <property type="entry name" value="Spermidine_synt_N"/>
</dbReference>
<dbReference type="InterPro" id="IPR037163">
    <property type="entry name" value="Spermidine_synt_N_sf"/>
</dbReference>
<dbReference type="NCBIfam" id="NF002010">
    <property type="entry name" value="PRK00811.1"/>
    <property type="match status" value="1"/>
</dbReference>
<dbReference type="NCBIfam" id="TIGR00417">
    <property type="entry name" value="speE"/>
    <property type="match status" value="1"/>
</dbReference>
<dbReference type="PANTHER" id="PTHR11558:SF11">
    <property type="entry name" value="SPERMIDINE SYNTHASE"/>
    <property type="match status" value="1"/>
</dbReference>
<dbReference type="PANTHER" id="PTHR11558">
    <property type="entry name" value="SPERMIDINE/SPERMINE SYNTHASE"/>
    <property type="match status" value="1"/>
</dbReference>
<dbReference type="Pfam" id="PF17284">
    <property type="entry name" value="Spermine_synt_N"/>
    <property type="match status" value="1"/>
</dbReference>
<dbReference type="Pfam" id="PF01564">
    <property type="entry name" value="Spermine_synth"/>
    <property type="match status" value="1"/>
</dbReference>
<dbReference type="PIRSF" id="PIRSF000502">
    <property type="entry name" value="Spermidine_synth"/>
    <property type="match status" value="1"/>
</dbReference>
<dbReference type="SUPFAM" id="SSF53335">
    <property type="entry name" value="S-adenosyl-L-methionine-dependent methyltransferases"/>
    <property type="match status" value="1"/>
</dbReference>
<dbReference type="PROSITE" id="PS01330">
    <property type="entry name" value="PABS_1"/>
    <property type="match status" value="1"/>
</dbReference>
<dbReference type="PROSITE" id="PS51006">
    <property type="entry name" value="PABS_2"/>
    <property type="match status" value="1"/>
</dbReference>
<accession>Q64674</accession>
<comment type="function">
    <text evidence="1">Catalyzes the production of spermidine from putrescine and decarboxylated S-adenosylmethionine (dcSAM). Has a strong preference for putrescine as substrate, and has very low activity towards 1,3-diaminopropane. Has extremely low activity towards spermidine (By similarity).</text>
</comment>
<comment type="catalytic activity">
    <reaction>
        <text>S-adenosyl 3-(methylsulfanyl)propylamine + putrescine = S-methyl-5'-thioadenosine + spermidine + H(+)</text>
        <dbReference type="Rhea" id="RHEA:12721"/>
        <dbReference type="ChEBI" id="CHEBI:15378"/>
        <dbReference type="ChEBI" id="CHEBI:17509"/>
        <dbReference type="ChEBI" id="CHEBI:57443"/>
        <dbReference type="ChEBI" id="CHEBI:57834"/>
        <dbReference type="ChEBI" id="CHEBI:326268"/>
        <dbReference type="EC" id="2.5.1.16"/>
    </reaction>
</comment>
<comment type="activity regulation">
    <text>The activity is thought to be regulated mainly by the availability of decarboxylated S-adenosylmethionine.</text>
</comment>
<comment type="pathway">
    <text>Amine and polyamine biosynthesis; spermidine biosynthesis; spermidine from putrescine: step 1/1.</text>
</comment>
<comment type="subunit">
    <text evidence="1">Homodimer or homotetramer.</text>
</comment>
<comment type="similarity">
    <text evidence="3">Belongs to the spermidine/spermine synthase family.</text>
</comment>